<evidence type="ECO:0000255" key="1">
    <source>
        <dbReference type="HAMAP-Rule" id="MF_00067"/>
    </source>
</evidence>
<feature type="chain" id="PRO_1000196998" description="Phosphoheptose isomerase">
    <location>
        <begin position="1"/>
        <end position="192"/>
    </location>
</feature>
<feature type="domain" description="SIS" evidence="1">
    <location>
        <begin position="37"/>
        <end position="192"/>
    </location>
</feature>
<feature type="binding site" evidence="1">
    <location>
        <begin position="52"/>
        <end position="54"/>
    </location>
    <ligand>
        <name>substrate</name>
    </ligand>
</feature>
<feature type="binding site" evidence="1">
    <location>
        <position position="61"/>
    </location>
    <ligand>
        <name>Zn(2+)</name>
        <dbReference type="ChEBI" id="CHEBI:29105"/>
    </ligand>
</feature>
<feature type="binding site" evidence="1">
    <location>
        <position position="65"/>
    </location>
    <ligand>
        <name>substrate</name>
    </ligand>
</feature>
<feature type="binding site" evidence="1">
    <location>
        <position position="65"/>
    </location>
    <ligand>
        <name>Zn(2+)</name>
        <dbReference type="ChEBI" id="CHEBI:29105"/>
    </ligand>
</feature>
<feature type="binding site" evidence="1">
    <location>
        <begin position="93"/>
        <end position="94"/>
    </location>
    <ligand>
        <name>substrate</name>
    </ligand>
</feature>
<feature type="binding site" evidence="1">
    <location>
        <begin position="119"/>
        <end position="121"/>
    </location>
    <ligand>
        <name>substrate</name>
    </ligand>
</feature>
<feature type="binding site" evidence="1">
    <location>
        <position position="124"/>
    </location>
    <ligand>
        <name>substrate</name>
    </ligand>
</feature>
<feature type="binding site" evidence="1">
    <location>
        <position position="172"/>
    </location>
    <ligand>
        <name>substrate</name>
    </ligand>
</feature>
<feature type="binding site" evidence="1">
    <location>
        <position position="172"/>
    </location>
    <ligand>
        <name>Zn(2+)</name>
        <dbReference type="ChEBI" id="CHEBI:29105"/>
    </ligand>
</feature>
<feature type="binding site" evidence="1">
    <location>
        <position position="180"/>
    </location>
    <ligand>
        <name>Zn(2+)</name>
        <dbReference type="ChEBI" id="CHEBI:29105"/>
    </ligand>
</feature>
<keyword id="KW-0119">Carbohydrate metabolism</keyword>
<keyword id="KW-0963">Cytoplasm</keyword>
<keyword id="KW-0413">Isomerase</keyword>
<keyword id="KW-0479">Metal-binding</keyword>
<keyword id="KW-0862">Zinc</keyword>
<reference key="1">
    <citation type="journal article" date="2008" name="J. Bacteriol.">
        <title>Insights into the environmental resistance gene pool from the genome sequence of the multidrug-resistant environmental isolate Escherichia coli SMS-3-5.</title>
        <authorList>
            <person name="Fricke W.F."/>
            <person name="Wright M.S."/>
            <person name="Lindell A.H."/>
            <person name="Harkins D.M."/>
            <person name="Baker-Austin C."/>
            <person name="Ravel J."/>
            <person name="Stepanauskas R."/>
        </authorList>
    </citation>
    <scope>NUCLEOTIDE SEQUENCE [LARGE SCALE GENOMIC DNA]</scope>
    <source>
        <strain>SMS-3-5 / SECEC</strain>
    </source>
</reference>
<gene>
    <name evidence="1" type="primary">gmhA</name>
    <name type="ordered locus">EcSMS35_0234</name>
</gene>
<protein>
    <recommendedName>
        <fullName evidence="1">Phosphoheptose isomerase</fullName>
        <ecNumber evidence="1">5.3.1.28</ecNumber>
    </recommendedName>
    <alternativeName>
        <fullName evidence="1">Sedoheptulose 7-phosphate isomerase</fullName>
    </alternativeName>
</protein>
<proteinExistence type="inferred from homology"/>
<accession>B1LHM8</accession>
<comment type="function">
    <text evidence="1">Catalyzes the isomerization of sedoheptulose 7-phosphate in D-glycero-D-manno-heptose 7-phosphate.</text>
</comment>
<comment type="catalytic activity">
    <reaction evidence="1">
        <text>2 D-sedoheptulose 7-phosphate = D-glycero-alpha-D-manno-heptose 7-phosphate + D-glycero-beta-D-manno-heptose 7-phosphate</text>
        <dbReference type="Rhea" id="RHEA:27489"/>
        <dbReference type="ChEBI" id="CHEBI:57483"/>
        <dbReference type="ChEBI" id="CHEBI:60203"/>
        <dbReference type="ChEBI" id="CHEBI:60204"/>
        <dbReference type="EC" id="5.3.1.28"/>
    </reaction>
</comment>
<comment type="cofactor">
    <cofactor evidence="1">
        <name>Zn(2+)</name>
        <dbReference type="ChEBI" id="CHEBI:29105"/>
    </cofactor>
    <text evidence="1">Binds 1 zinc ion per subunit.</text>
</comment>
<comment type="pathway">
    <text evidence="1">Carbohydrate biosynthesis; D-glycero-D-manno-heptose 7-phosphate biosynthesis; D-glycero-alpha-D-manno-heptose 7-phosphate and D-glycero-beta-D-manno-heptose 7-phosphate from sedoheptulose 7-phosphate: step 1/1.</text>
</comment>
<comment type="subunit">
    <text evidence="1">Homotetramer.</text>
</comment>
<comment type="subcellular location">
    <subcellularLocation>
        <location evidence="1">Cytoplasm</location>
    </subcellularLocation>
</comment>
<comment type="miscellaneous">
    <text evidence="1">The reaction produces a racemic mixture of D-glycero-alpha-D-manno-heptose 7-phosphate and D-glycero-beta-D-manno-heptose 7-phosphate.</text>
</comment>
<comment type="similarity">
    <text evidence="1">Belongs to the SIS family. GmhA subfamily.</text>
</comment>
<name>GMHA_ECOSM</name>
<organism>
    <name type="scientific">Escherichia coli (strain SMS-3-5 / SECEC)</name>
    <dbReference type="NCBI Taxonomy" id="439855"/>
    <lineage>
        <taxon>Bacteria</taxon>
        <taxon>Pseudomonadati</taxon>
        <taxon>Pseudomonadota</taxon>
        <taxon>Gammaproteobacteria</taxon>
        <taxon>Enterobacterales</taxon>
        <taxon>Enterobacteriaceae</taxon>
        <taxon>Escherichia</taxon>
    </lineage>
</organism>
<dbReference type="EC" id="5.3.1.28" evidence="1"/>
<dbReference type="EMBL" id="CP000970">
    <property type="protein sequence ID" value="ACB17086.1"/>
    <property type="molecule type" value="Genomic_DNA"/>
</dbReference>
<dbReference type="SMR" id="B1LHM8"/>
<dbReference type="KEGG" id="ecm:EcSMS35_0234"/>
<dbReference type="HOGENOM" id="CLU_080999_4_0_6"/>
<dbReference type="UniPathway" id="UPA00041">
    <property type="reaction ID" value="UER00436"/>
</dbReference>
<dbReference type="Proteomes" id="UP000007011">
    <property type="component" value="Chromosome"/>
</dbReference>
<dbReference type="GO" id="GO:0005737">
    <property type="term" value="C:cytoplasm"/>
    <property type="evidence" value="ECO:0007669"/>
    <property type="project" value="UniProtKB-SubCell"/>
</dbReference>
<dbReference type="GO" id="GO:0097367">
    <property type="term" value="F:carbohydrate derivative binding"/>
    <property type="evidence" value="ECO:0007669"/>
    <property type="project" value="InterPro"/>
</dbReference>
<dbReference type="GO" id="GO:0008968">
    <property type="term" value="F:D-sedoheptulose 7-phosphate isomerase activity"/>
    <property type="evidence" value="ECO:0007669"/>
    <property type="project" value="UniProtKB-UniRule"/>
</dbReference>
<dbReference type="GO" id="GO:0008270">
    <property type="term" value="F:zinc ion binding"/>
    <property type="evidence" value="ECO:0007669"/>
    <property type="project" value="UniProtKB-UniRule"/>
</dbReference>
<dbReference type="GO" id="GO:0005975">
    <property type="term" value="P:carbohydrate metabolic process"/>
    <property type="evidence" value="ECO:0007669"/>
    <property type="project" value="UniProtKB-UniRule"/>
</dbReference>
<dbReference type="GO" id="GO:2001061">
    <property type="term" value="P:D-glycero-D-manno-heptose 7-phosphate biosynthetic process"/>
    <property type="evidence" value="ECO:0007669"/>
    <property type="project" value="UniProtKB-UniPathway"/>
</dbReference>
<dbReference type="CDD" id="cd05006">
    <property type="entry name" value="SIS_GmhA"/>
    <property type="match status" value="1"/>
</dbReference>
<dbReference type="FunFam" id="3.40.50.10490:FF:000013">
    <property type="entry name" value="Phosphoheptose isomerase"/>
    <property type="match status" value="1"/>
</dbReference>
<dbReference type="Gene3D" id="3.40.50.10490">
    <property type="entry name" value="Glucose-6-phosphate isomerase like protein, domain 1"/>
    <property type="match status" value="1"/>
</dbReference>
<dbReference type="HAMAP" id="MF_00067">
    <property type="entry name" value="GmhA"/>
    <property type="match status" value="1"/>
</dbReference>
<dbReference type="InterPro" id="IPR035461">
    <property type="entry name" value="GmhA/DiaA"/>
</dbReference>
<dbReference type="InterPro" id="IPR004515">
    <property type="entry name" value="Phosphoheptose_Isoase"/>
</dbReference>
<dbReference type="InterPro" id="IPR001347">
    <property type="entry name" value="SIS_dom"/>
</dbReference>
<dbReference type="InterPro" id="IPR046348">
    <property type="entry name" value="SIS_dom_sf"/>
</dbReference>
<dbReference type="InterPro" id="IPR050099">
    <property type="entry name" value="SIS_GmhA/DiaA_subfam"/>
</dbReference>
<dbReference type="NCBIfam" id="TIGR00441">
    <property type="entry name" value="gmhA"/>
    <property type="match status" value="1"/>
</dbReference>
<dbReference type="NCBIfam" id="NF001628">
    <property type="entry name" value="PRK00414.1"/>
    <property type="match status" value="1"/>
</dbReference>
<dbReference type="PANTHER" id="PTHR30390:SF7">
    <property type="entry name" value="PHOSPHOHEPTOSE ISOMERASE"/>
    <property type="match status" value="1"/>
</dbReference>
<dbReference type="PANTHER" id="PTHR30390">
    <property type="entry name" value="SEDOHEPTULOSE 7-PHOSPHATE ISOMERASE / DNAA INITIATOR-ASSOCIATING FACTOR FOR REPLICATION INITIATION"/>
    <property type="match status" value="1"/>
</dbReference>
<dbReference type="Pfam" id="PF13580">
    <property type="entry name" value="SIS_2"/>
    <property type="match status" value="1"/>
</dbReference>
<dbReference type="SUPFAM" id="SSF53697">
    <property type="entry name" value="SIS domain"/>
    <property type="match status" value="1"/>
</dbReference>
<dbReference type="PROSITE" id="PS51464">
    <property type="entry name" value="SIS"/>
    <property type="match status" value="1"/>
</dbReference>
<sequence length="192" mass="20815">MYQDLIRNELNEAAETLANFLKDDANIHAIQRAAVLLADSFKAGGKVLSCGNGGSHCDAMHFAEELTGRYRENRPGYPAIAISDVSHISCVGNDFGFNDIFSRYVEAVGREGDVLLGISTSGNSANVIKAIAAAREKGMKVITLTGKDGGKMAGTADIEIRVPHFGYADRIQEIHIKVIHILIQLIEKEMVK</sequence>